<dbReference type="EC" id="5.1.3.32" evidence="1"/>
<dbReference type="EMBL" id="CP000271">
    <property type="protein sequence ID" value="ABE34921.1"/>
    <property type="molecule type" value="Genomic_DNA"/>
</dbReference>
<dbReference type="RefSeq" id="WP_011492230.1">
    <property type="nucleotide sequence ID" value="NC_007952.1"/>
</dbReference>
<dbReference type="SMR" id="Q13LW8"/>
<dbReference type="STRING" id="266265.Bxe_B1033"/>
<dbReference type="KEGG" id="bxb:DR64_6354"/>
<dbReference type="KEGG" id="bxe:Bxe_B1033"/>
<dbReference type="PATRIC" id="fig|266265.5.peg.6731"/>
<dbReference type="eggNOG" id="COG3254">
    <property type="taxonomic scope" value="Bacteria"/>
</dbReference>
<dbReference type="OrthoDB" id="9799608at2"/>
<dbReference type="UniPathway" id="UPA00125"/>
<dbReference type="Proteomes" id="UP000001817">
    <property type="component" value="Chromosome 2"/>
</dbReference>
<dbReference type="GO" id="GO:0005737">
    <property type="term" value="C:cytoplasm"/>
    <property type="evidence" value="ECO:0007669"/>
    <property type="project" value="UniProtKB-SubCell"/>
</dbReference>
<dbReference type="GO" id="GO:0062192">
    <property type="term" value="F:L-rhamnose mutarotase activity"/>
    <property type="evidence" value="ECO:0007669"/>
    <property type="project" value="UniProtKB-EC"/>
</dbReference>
<dbReference type="GO" id="GO:0019301">
    <property type="term" value="P:rhamnose catabolic process"/>
    <property type="evidence" value="ECO:0007669"/>
    <property type="project" value="TreeGrafter"/>
</dbReference>
<dbReference type="Gene3D" id="3.30.70.100">
    <property type="match status" value="1"/>
</dbReference>
<dbReference type="HAMAP" id="MF_01663">
    <property type="entry name" value="L_rham_rotase"/>
    <property type="match status" value="1"/>
</dbReference>
<dbReference type="InterPro" id="IPR011008">
    <property type="entry name" value="Dimeric_a/b-barrel"/>
</dbReference>
<dbReference type="InterPro" id="IPR013448">
    <property type="entry name" value="L-rhamnose_mutarotase"/>
</dbReference>
<dbReference type="InterPro" id="IPR008000">
    <property type="entry name" value="Rham/fucose_mutarotase"/>
</dbReference>
<dbReference type="NCBIfam" id="TIGR02625">
    <property type="entry name" value="YiiL_rotase"/>
    <property type="match status" value="1"/>
</dbReference>
<dbReference type="PANTHER" id="PTHR34389">
    <property type="entry name" value="L-RHAMNOSE MUTAROTASE"/>
    <property type="match status" value="1"/>
</dbReference>
<dbReference type="PANTHER" id="PTHR34389:SF2">
    <property type="entry name" value="L-RHAMNOSE MUTAROTASE"/>
    <property type="match status" value="1"/>
</dbReference>
<dbReference type="Pfam" id="PF05336">
    <property type="entry name" value="rhaM"/>
    <property type="match status" value="1"/>
</dbReference>
<dbReference type="SUPFAM" id="SSF54909">
    <property type="entry name" value="Dimeric alpha+beta barrel"/>
    <property type="match status" value="1"/>
</dbReference>
<comment type="function">
    <text evidence="1">Involved in the anomeric conversion of L-rhamnose.</text>
</comment>
<comment type="catalytic activity">
    <reaction evidence="1">
        <text>alpha-L-rhamnose = beta-L-rhamnose</text>
        <dbReference type="Rhea" id="RHEA:25584"/>
        <dbReference type="ChEBI" id="CHEBI:27586"/>
        <dbReference type="ChEBI" id="CHEBI:27907"/>
        <dbReference type="EC" id="5.1.3.32"/>
    </reaction>
</comment>
<comment type="pathway">
    <text evidence="1">Carbohydrate metabolism; L-rhamnose metabolism.</text>
</comment>
<comment type="subunit">
    <text evidence="1">Homodimer.</text>
</comment>
<comment type="subcellular location">
    <subcellularLocation>
        <location evidence="1">Cytoplasm</location>
    </subcellularLocation>
</comment>
<comment type="similarity">
    <text evidence="1">Belongs to the rhamnose mutarotase family.</text>
</comment>
<keyword id="KW-0119">Carbohydrate metabolism</keyword>
<keyword id="KW-0963">Cytoplasm</keyword>
<keyword id="KW-0413">Isomerase</keyword>
<keyword id="KW-1185">Reference proteome</keyword>
<keyword id="KW-0684">Rhamnose metabolism</keyword>
<reference key="1">
    <citation type="journal article" date="2006" name="Proc. Natl. Acad. Sci. U.S.A.">
        <title>Burkholderia xenovorans LB400 harbors a multi-replicon, 9.73-Mbp genome shaped for versatility.</title>
        <authorList>
            <person name="Chain P.S.G."/>
            <person name="Denef V.J."/>
            <person name="Konstantinidis K.T."/>
            <person name="Vergez L.M."/>
            <person name="Agullo L."/>
            <person name="Reyes V.L."/>
            <person name="Hauser L."/>
            <person name="Cordova M."/>
            <person name="Gomez L."/>
            <person name="Gonzalez M."/>
            <person name="Land M."/>
            <person name="Lao V."/>
            <person name="Larimer F."/>
            <person name="LiPuma J.J."/>
            <person name="Mahenthiralingam E."/>
            <person name="Malfatti S.A."/>
            <person name="Marx C.J."/>
            <person name="Parnell J.J."/>
            <person name="Ramette A."/>
            <person name="Richardson P."/>
            <person name="Seeger M."/>
            <person name="Smith D."/>
            <person name="Spilker T."/>
            <person name="Sul W.J."/>
            <person name="Tsoi T.V."/>
            <person name="Ulrich L.E."/>
            <person name="Zhulin I.B."/>
            <person name="Tiedje J.M."/>
        </authorList>
    </citation>
    <scope>NUCLEOTIDE SEQUENCE [LARGE SCALE GENOMIC DNA]</scope>
    <source>
        <strain>LB400</strain>
    </source>
</reference>
<sequence length="107" mass="12822">METIAFRMVLNPGMREEYERRHAQIWPELVDALHNAGVRDYRIFFDPDSHHLFAMLTRHNHHTMNELPQLDVMRKWWDYMADIMQTAADHTPLQQPLEPVFHLNSLS</sequence>
<organism>
    <name type="scientific">Paraburkholderia xenovorans (strain LB400)</name>
    <dbReference type="NCBI Taxonomy" id="266265"/>
    <lineage>
        <taxon>Bacteria</taxon>
        <taxon>Pseudomonadati</taxon>
        <taxon>Pseudomonadota</taxon>
        <taxon>Betaproteobacteria</taxon>
        <taxon>Burkholderiales</taxon>
        <taxon>Burkholderiaceae</taxon>
        <taxon>Paraburkholderia</taxon>
    </lineage>
</organism>
<accession>Q13LW8</accession>
<proteinExistence type="inferred from homology"/>
<name>RHAM_PARXL</name>
<feature type="chain" id="PRO_0000344560" description="L-rhamnose mutarotase">
    <location>
        <begin position="1"/>
        <end position="107"/>
    </location>
</feature>
<feature type="active site" description="Proton donor" evidence="1">
    <location>
        <position position="22"/>
    </location>
</feature>
<feature type="binding site" evidence="1">
    <location>
        <position position="18"/>
    </location>
    <ligand>
        <name>substrate</name>
    </ligand>
</feature>
<feature type="binding site" evidence="1">
    <location>
        <position position="41"/>
    </location>
    <ligand>
        <name>substrate</name>
    </ligand>
</feature>
<feature type="binding site" evidence="1">
    <location>
        <begin position="76"/>
        <end position="77"/>
    </location>
    <ligand>
        <name>substrate</name>
    </ligand>
</feature>
<gene>
    <name evidence="1" type="primary">rhaM</name>
    <name type="ordered locus">Bxeno_B1953</name>
    <name type="ORF">Bxe_B1033</name>
</gene>
<evidence type="ECO:0000255" key="1">
    <source>
        <dbReference type="HAMAP-Rule" id="MF_01663"/>
    </source>
</evidence>
<protein>
    <recommendedName>
        <fullName evidence="1">L-rhamnose mutarotase</fullName>
        <ecNumber evidence="1">5.1.3.32</ecNumber>
    </recommendedName>
    <alternativeName>
        <fullName evidence="1">Rhamnose 1-epimerase</fullName>
    </alternativeName>
    <alternativeName>
        <fullName evidence="1">Type-3 mutarotase</fullName>
    </alternativeName>
</protein>